<organism>
    <name type="scientific">Xanthomonas oryzae pv. oryzae (strain KACC10331 / KXO85)</name>
    <dbReference type="NCBI Taxonomy" id="291331"/>
    <lineage>
        <taxon>Bacteria</taxon>
        <taxon>Pseudomonadati</taxon>
        <taxon>Pseudomonadota</taxon>
        <taxon>Gammaproteobacteria</taxon>
        <taxon>Lysobacterales</taxon>
        <taxon>Lysobacteraceae</taxon>
        <taxon>Xanthomonas</taxon>
    </lineage>
</organism>
<sequence>MSEHAPLRALNTFHVEATARWLLSVHTPEALPQALAAPEIADQPLLVLGSGSNVLLAGDPPGCVLCFENRDTAIIAHHADHAIVRAGAGVNWHALVLYSLQQGLSGLENLALIPGTVGACPIQNIGAYGAQVGDFIHVVEAFDRHHQQFVRLDAAACALGYRDSVFKQQPERYLIVAVEFNLPLLCELRLDYAGIREELASMGAELARAADVAQAVINIRQRKLPDPDVLGNAGSFFKNPLLPNEQIAALQASFTDMPVYPGEHAGLGKLSAAWLIEQCGWKGRREGDAGVSPEHALVLVNYGTASGAQLLDFARRIAESVRERYSVILEPEPRIIGAHW</sequence>
<accession>Q5H0N1</accession>
<dbReference type="EC" id="1.3.1.98" evidence="1"/>
<dbReference type="EMBL" id="AE013598">
    <property type="protein sequence ID" value="AAW75490.1"/>
    <property type="molecule type" value="Genomic_DNA"/>
</dbReference>
<dbReference type="SMR" id="Q5H0N1"/>
<dbReference type="STRING" id="291331.XOO2236"/>
<dbReference type="KEGG" id="xoo:XOO2236"/>
<dbReference type="HOGENOM" id="CLU_035304_0_0_6"/>
<dbReference type="UniPathway" id="UPA00219"/>
<dbReference type="Proteomes" id="UP000006735">
    <property type="component" value="Chromosome"/>
</dbReference>
<dbReference type="GO" id="GO:0005829">
    <property type="term" value="C:cytosol"/>
    <property type="evidence" value="ECO:0007669"/>
    <property type="project" value="TreeGrafter"/>
</dbReference>
<dbReference type="GO" id="GO:0071949">
    <property type="term" value="F:FAD binding"/>
    <property type="evidence" value="ECO:0007669"/>
    <property type="project" value="InterPro"/>
</dbReference>
<dbReference type="GO" id="GO:0008762">
    <property type="term" value="F:UDP-N-acetylmuramate dehydrogenase activity"/>
    <property type="evidence" value="ECO:0007669"/>
    <property type="project" value="UniProtKB-UniRule"/>
</dbReference>
<dbReference type="GO" id="GO:0051301">
    <property type="term" value="P:cell division"/>
    <property type="evidence" value="ECO:0007669"/>
    <property type="project" value="UniProtKB-KW"/>
</dbReference>
<dbReference type="GO" id="GO:0071555">
    <property type="term" value="P:cell wall organization"/>
    <property type="evidence" value="ECO:0007669"/>
    <property type="project" value="UniProtKB-KW"/>
</dbReference>
<dbReference type="GO" id="GO:0009252">
    <property type="term" value="P:peptidoglycan biosynthetic process"/>
    <property type="evidence" value="ECO:0007669"/>
    <property type="project" value="UniProtKB-UniRule"/>
</dbReference>
<dbReference type="GO" id="GO:0008360">
    <property type="term" value="P:regulation of cell shape"/>
    <property type="evidence" value="ECO:0007669"/>
    <property type="project" value="UniProtKB-KW"/>
</dbReference>
<dbReference type="Gene3D" id="3.30.465.10">
    <property type="match status" value="1"/>
</dbReference>
<dbReference type="Gene3D" id="3.90.78.10">
    <property type="entry name" value="UDP-N-acetylenolpyruvoylglucosamine reductase, C-terminal domain"/>
    <property type="match status" value="1"/>
</dbReference>
<dbReference type="Gene3D" id="3.30.43.10">
    <property type="entry name" value="Uridine Diphospho-n-acetylenolpyruvylglucosamine Reductase, domain 2"/>
    <property type="match status" value="1"/>
</dbReference>
<dbReference type="HAMAP" id="MF_00037">
    <property type="entry name" value="MurB"/>
    <property type="match status" value="1"/>
</dbReference>
<dbReference type="InterPro" id="IPR016166">
    <property type="entry name" value="FAD-bd_PCMH"/>
</dbReference>
<dbReference type="InterPro" id="IPR036318">
    <property type="entry name" value="FAD-bd_PCMH-like_sf"/>
</dbReference>
<dbReference type="InterPro" id="IPR016167">
    <property type="entry name" value="FAD-bd_PCMH_sub1"/>
</dbReference>
<dbReference type="InterPro" id="IPR016169">
    <property type="entry name" value="FAD-bd_PCMH_sub2"/>
</dbReference>
<dbReference type="InterPro" id="IPR003170">
    <property type="entry name" value="MurB"/>
</dbReference>
<dbReference type="InterPro" id="IPR011601">
    <property type="entry name" value="MurB_C"/>
</dbReference>
<dbReference type="InterPro" id="IPR036635">
    <property type="entry name" value="MurB_C_sf"/>
</dbReference>
<dbReference type="InterPro" id="IPR006094">
    <property type="entry name" value="Oxid_FAD_bind_N"/>
</dbReference>
<dbReference type="NCBIfam" id="TIGR00179">
    <property type="entry name" value="murB"/>
    <property type="match status" value="1"/>
</dbReference>
<dbReference type="NCBIfam" id="NF000755">
    <property type="entry name" value="PRK00046.1"/>
    <property type="match status" value="1"/>
</dbReference>
<dbReference type="NCBIfam" id="NF010478">
    <property type="entry name" value="PRK13903.1"/>
    <property type="match status" value="1"/>
</dbReference>
<dbReference type="PANTHER" id="PTHR21071">
    <property type="entry name" value="UDP-N-ACETYLENOLPYRUVOYLGLUCOSAMINE REDUCTASE"/>
    <property type="match status" value="1"/>
</dbReference>
<dbReference type="PANTHER" id="PTHR21071:SF4">
    <property type="entry name" value="UDP-N-ACETYLENOLPYRUVOYLGLUCOSAMINE REDUCTASE"/>
    <property type="match status" value="1"/>
</dbReference>
<dbReference type="Pfam" id="PF01565">
    <property type="entry name" value="FAD_binding_4"/>
    <property type="match status" value="1"/>
</dbReference>
<dbReference type="Pfam" id="PF02873">
    <property type="entry name" value="MurB_C"/>
    <property type="match status" value="1"/>
</dbReference>
<dbReference type="SUPFAM" id="SSF56176">
    <property type="entry name" value="FAD-binding/transporter-associated domain-like"/>
    <property type="match status" value="1"/>
</dbReference>
<dbReference type="SUPFAM" id="SSF56194">
    <property type="entry name" value="Uridine diphospho-N-Acetylenolpyruvylglucosamine reductase, MurB, C-terminal domain"/>
    <property type="match status" value="1"/>
</dbReference>
<dbReference type="PROSITE" id="PS51387">
    <property type="entry name" value="FAD_PCMH"/>
    <property type="match status" value="1"/>
</dbReference>
<proteinExistence type="inferred from homology"/>
<gene>
    <name evidence="1" type="primary">murB</name>
    <name type="ordered locus">XOO2236</name>
</gene>
<reference key="1">
    <citation type="journal article" date="2005" name="Nucleic Acids Res.">
        <title>The genome sequence of Xanthomonas oryzae pathovar oryzae KACC10331, the bacterial blight pathogen of rice.</title>
        <authorList>
            <person name="Lee B.-M."/>
            <person name="Park Y.-J."/>
            <person name="Park D.-S."/>
            <person name="Kang H.-W."/>
            <person name="Kim J.-G."/>
            <person name="Song E.-S."/>
            <person name="Park I.-C."/>
            <person name="Yoon U.-H."/>
            <person name="Hahn J.-H."/>
            <person name="Koo B.-S."/>
            <person name="Lee G.-B."/>
            <person name="Kim H."/>
            <person name="Park H.-S."/>
            <person name="Yoon K.-O."/>
            <person name="Kim J.-H."/>
            <person name="Jung C.-H."/>
            <person name="Koh N.-H."/>
            <person name="Seo J.-S."/>
            <person name="Go S.-J."/>
        </authorList>
    </citation>
    <scope>NUCLEOTIDE SEQUENCE [LARGE SCALE GENOMIC DNA]</scope>
    <source>
        <strain>KACC10331 / KXO85</strain>
    </source>
</reference>
<comment type="function">
    <text evidence="1">Cell wall formation.</text>
</comment>
<comment type="catalytic activity">
    <reaction evidence="1">
        <text>UDP-N-acetyl-alpha-D-muramate + NADP(+) = UDP-N-acetyl-3-O-(1-carboxyvinyl)-alpha-D-glucosamine + NADPH + H(+)</text>
        <dbReference type="Rhea" id="RHEA:12248"/>
        <dbReference type="ChEBI" id="CHEBI:15378"/>
        <dbReference type="ChEBI" id="CHEBI:57783"/>
        <dbReference type="ChEBI" id="CHEBI:58349"/>
        <dbReference type="ChEBI" id="CHEBI:68483"/>
        <dbReference type="ChEBI" id="CHEBI:70757"/>
        <dbReference type="EC" id="1.3.1.98"/>
    </reaction>
</comment>
<comment type="cofactor">
    <cofactor evidence="1">
        <name>FAD</name>
        <dbReference type="ChEBI" id="CHEBI:57692"/>
    </cofactor>
</comment>
<comment type="pathway">
    <text evidence="1">Cell wall biogenesis; peptidoglycan biosynthesis.</text>
</comment>
<comment type="subcellular location">
    <subcellularLocation>
        <location evidence="1">Cytoplasm</location>
    </subcellularLocation>
</comment>
<comment type="similarity">
    <text evidence="1">Belongs to the MurB family.</text>
</comment>
<evidence type="ECO:0000255" key="1">
    <source>
        <dbReference type="HAMAP-Rule" id="MF_00037"/>
    </source>
</evidence>
<keyword id="KW-0131">Cell cycle</keyword>
<keyword id="KW-0132">Cell division</keyword>
<keyword id="KW-0133">Cell shape</keyword>
<keyword id="KW-0961">Cell wall biogenesis/degradation</keyword>
<keyword id="KW-0963">Cytoplasm</keyword>
<keyword id="KW-0274">FAD</keyword>
<keyword id="KW-0285">Flavoprotein</keyword>
<keyword id="KW-0521">NADP</keyword>
<keyword id="KW-0560">Oxidoreductase</keyword>
<keyword id="KW-0573">Peptidoglycan synthesis</keyword>
<keyword id="KW-1185">Reference proteome</keyword>
<protein>
    <recommendedName>
        <fullName evidence="1">UDP-N-acetylenolpyruvoylglucosamine reductase</fullName>
        <ecNumber evidence="1">1.3.1.98</ecNumber>
    </recommendedName>
    <alternativeName>
        <fullName evidence="1">UDP-N-acetylmuramate dehydrogenase</fullName>
    </alternativeName>
</protein>
<feature type="chain" id="PRO_0000224739" description="UDP-N-acetylenolpyruvoylglucosamine reductase">
    <location>
        <begin position="1"/>
        <end position="340"/>
    </location>
</feature>
<feature type="domain" description="FAD-binding PCMH-type" evidence="1">
    <location>
        <begin position="14"/>
        <end position="185"/>
    </location>
</feature>
<feature type="active site" evidence="1">
    <location>
        <position position="162"/>
    </location>
</feature>
<feature type="active site" description="Proton donor" evidence="1">
    <location>
        <position position="235"/>
    </location>
</feature>
<feature type="active site" evidence="1">
    <location>
        <position position="332"/>
    </location>
</feature>
<name>MURB_XANOR</name>